<evidence type="ECO:0000250" key="1"/>
<evidence type="ECO:0000250" key="2">
    <source>
        <dbReference type="UniProtKB" id="P61964"/>
    </source>
</evidence>
<evidence type="ECO:0000250" key="3">
    <source>
        <dbReference type="UniProtKB" id="P61965"/>
    </source>
</evidence>
<evidence type="ECO:0000256" key="4">
    <source>
        <dbReference type="SAM" id="MobiDB-lite"/>
    </source>
</evidence>
<evidence type="ECO:0000269" key="5">
    <source>
    </source>
</evidence>
<evidence type="ECO:0000305" key="6"/>
<evidence type="ECO:0007829" key="7">
    <source>
        <dbReference type="PDB" id="4QQE"/>
    </source>
</evidence>
<dbReference type="EMBL" id="BC100156">
    <property type="protein sequence ID" value="AAI00157.1"/>
    <property type="molecule type" value="mRNA"/>
</dbReference>
<dbReference type="RefSeq" id="NP_001034123.1">
    <property type="nucleotide sequence ID" value="NM_001039034.1"/>
</dbReference>
<dbReference type="RefSeq" id="XP_006233893.1">
    <property type="nucleotide sequence ID" value="XM_006233831.4"/>
</dbReference>
<dbReference type="RefSeq" id="XP_063140133.1">
    <property type="nucleotide sequence ID" value="XM_063284063.1"/>
</dbReference>
<dbReference type="PDB" id="4QQE">
    <property type="method" value="X-ray"/>
    <property type="resolution" value="1.80 A"/>
    <property type="chains" value="A=24-334"/>
</dbReference>
<dbReference type="PDBsum" id="4QQE"/>
<dbReference type="SMR" id="Q498M4"/>
<dbReference type="CORUM" id="Q498M4"/>
<dbReference type="FunCoup" id="Q498M4">
    <property type="interactions" value="2951"/>
</dbReference>
<dbReference type="IntAct" id="Q498M4">
    <property type="interactions" value="1"/>
</dbReference>
<dbReference type="STRING" id="10116.ENSRNOP00000011556"/>
<dbReference type="GlyGen" id="Q498M4">
    <property type="glycosylation" value="1 site"/>
</dbReference>
<dbReference type="iPTMnet" id="Q498M4"/>
<dbReference type="PhosphoSitePlus" id="Q498M4"/>
<dbReference type="PaxDb" id="10116-ENSRNOP00000011556"/>
<dbReference type="GeneID" id="362093"/>
<dbReference type="KEGG" id="rno:362093"/>
<dbReference type="UCSC" id="RGD:1305159">
    <property type="organism name" value="rat"/>
</dbReference>
<dbReference type="AGR" id="RGD:1305159"/>
<dbReference type="CTD" id="11091"/>
<dbReference type="RGD" id="1305159">
    <property type="gene designation" value="Wdr5"/>
</dbReference>
<dbReference type="VEuPathDB" id="HostDB:ENSRNOG00000008212"/>
<dbReference type="eggNOG" id="KOG0266">
    <property type="taxonomic scope" value="Eukaryota"/>
</dbReference>
<dbReference type="HOGENOM" id="CLU_000288_57_1_1"/>
<dbReference type="InParanoid" id="Q498M4"/>
<dbReference type="OrthoDB" id="674604at2759"/>
<dbReference type="PhylomeDB" id="Q498M4"/>
<dbReference type="TreeFam" id="TF314125"/>
<dbReference type="Reactome" id="R-RNO-3214841">
    <property type="pathway name" value="PKMTs methylate histone lysines"/>
</dbReference>
<dbReference type="Reactome" id="R-RNO-3214847">
    <property type="pathway name" value="HATs acetylate histones"/>
</dbReference>
<dbReference type="Reactome" id="R-RNO-3214858">
    <property type="pathway name" value="RMTs methylate histone arginines"/>
</dbReference>
<dbReference type="Reactome" id="R-RNO-8936459">
    <property type="pathway name" value="RUNX1 regulates genes involved in megakaryocyte differentiation and platelet function"/>
</dbReference>
<dbReference type="Reactome" id="R-RNO-8951664">
    <property type="pathway name" value="Neddylation"/>
</dbReference>
<dbReference type="Reactome" id="R-RNO-9772755">
    <property type="pathway name" value="Formation of WDR5-containing histone-modifying complexes"/>
</dbReference>
<dbReference type="PRO" id="PR:Q498M4"/>
<dbReference type="Proteomes" id="UP000002494">
    <property type="component" value="Chromosome 3"/>
</dbReference>
<dbReference type="Bgee" id="ENSRNOG00000008212">
    <property type="expression patterns" value="Expressed in thymus and 20 other cell types or tissues"/>
</dbReference>
<dbReference type="GO" id="GO:0140672">
    <property type="term" value="C:ATAC complex"/>
    <property type="evidence" value="ECO:0000266"/>
    <property type="project" value="RGD"/>
</dbReference>
<dbReference type="GO" id="GO:0000123">
    <property type="term" value="C:histone acetyltransferase complex"/>
    <property type="evidence" value="ECO:0000250"/>
    <property type="project" value="UniProtKB"/>
</dbReference>
<dbReference type="GO" id="GO:0035097">
    <property type="term" value="C:histone methyltransferase complex"/>
    <property type="evidence" value="ECO:0000250"/>
    <property type="project" value="UniProtKB"/>
</dbReference>
<dbReference type="GO" id="GO:0071339">
    <property type="term" value="C:MLL1 complex"/>
    <property type="evidence" value="ECO:0000250"/>
    <property type="project" value="UniProtKB"/>
</dbReference>
<dbReference type="GO" id="GO:0044665">
    <property type="term" value="C:MLL1/2 complex"/>
    <property type="evidence" value="ECO:0000266"/>
    <property type="project" value="RGD"/>
</dbReference>
<dbReference type="GO" id="GO:0044666">
    <property type="term" value="C:MLL3/4 complex"/>
    <property type="evidence" value="ECO:0000266"/>
    <property type="project" value="RGD"/>
</dbReference>
<dbReference type="GO" id="GO:0044545">
    <property type="term" value="C:NSL complex"/>
    <property type="evidence" value="ECO:0000266"/>
    <property type="project" value="RGD"/>
</dbReference>
<dbReference type="GO" id="GO:0005634">
    <property type="term" value="C:nucleus"/>
    <property type="evidence" value="ECO:0000250"/>
    <property type="project" value="UniProtKB"/>
</dbReference>
<dbReference type="GO" id="GO:0048188">
    <property type="term" value="C:Set1C/COMPASS complex"/>
    <property type="evidence" value="ECO:0000250"/>
    <property type="project" value="UniProtKB"/>
</dbReference>
<dbReference type="GO" id="GO:0042393">
    <property type="term" value="F:histone binding"/>
    <property type="evidence" value="ECO:0000266"/>
    <property type="project" value="RGD"/>
</dbReference>
<dbReference type="GO" id="GO:0042800">
    <property type="term" value="F:histone H3K4 methyltransferase activity"/>
    <property type="evidence" value="ECO:0000266"/>
    <property type="project" value="RGD"/>
</dbReference>
<dbReference type="GO" id="GO:0140109">
    <property type="term" value="F:histone H3K4me1 reader activity"/>
    <property type="evidence" value="ECO:0000250"/>
    <property type="project" value="UniProtKB"/>
</dbReference>
<dbReference type="GO" id="GO:0035064">
    <property type="term" value="F:methylated histone binding"/>
    <property type="evidence" value="ECO:0000266"/>
    <property type="project" value="RGD"/>
</dbReference>
<dbReference type="GO" id="GO:0006094">
    <property type="term" value="P:gluconeogenesis"/>
    <property type="evidence" value="ECO:0000266"/>
    <property type="project" value="RGD"/>
</dbReference>
<dbReference type="GO" id="GO:0000122">
    <property type="term" value="P:negative regulation of transcription by RNA polymerase II"/>
    <property type="evidence" value="ECO:0000266"/>
    <property type="project" value="RGD"/>
</dbReference>
<dbReference type="GO" id="GO:0031175">
    <property type="term" value="P:neuron projection development"/>
    <property type="evidence" value="ECO:0000314"/>
    <property type="project" value="RGD"/>
</dbReference>
<dbReference type="GO" id="GO:0045722">
    <property type="term" value="P:positive regulation of gluconeogenesis"/>
    <property type="evidence" value="ECO:0000266"/>
    <property type="project" value="RGD"/>
</dbReference>
<dbReference type="GO" id="GO:0051726">
    <property type="term" value="P:regulation of cell cycle"/>
    <property type="evidence" value="ECO:0000266"/>
    <property type="project" value="RGD"/>
</dbReference>
<dbReference type="GO" id="GO:0051302">
    <property type="term" value="P:regulation of cell division"/>
    <property type="evidence" value="ECO:0000266"/>
    <property type="project" value="RGD"/>
</dbReference>
<dbReference type="GO" id="GO:0006355">
    <property type="term" value="P:regulation of DNA-templated transcription"/>
    <property type="evidence" value="ECO:0000266"/>
    <property type="project" value="RGD"/>
</dbReference>
<dbReference type="GO" id="GO:0045995">
    <property type="term" value="P:regulation of embryonic development"/>
    <property type="evidence" value="ECO:0000266"/>
    <property type="project" value="RGD"/>
</dbReference>
<dbReference type="GO" id="GO:0006357">
    <property type="term" value="P:regulation of transcription by RNA polymerase II"/>
    <property type="evidence" value="ECO:0000266"/>
    <property type="project" value="RGD"/>
</dbReference>
<dbReference type="GO" id="GO:0001501">
    <property type="term" value="P:skeletal system development"/>
    <property type="evidence" value="ECO:0000266"/>
    <property type="project" value="RGD"/>
</dbReference>
<dbReference type="GO" id="GO:0045815">
    <property type="term" value="P:transcription initiation-coupled chromatin remodeling"/>
    <property type="evidence" value="ECO:0000250"/>
    <property type="project" value="UniProtKB"/>
</dbReference>
<dbReference type="CDD" id="cd00200">
    <property type="entry name" value="WD40"/>
    <property type="match status" value="1"/>
</dbReference>
<dbReference type="FunFam" id="2.130.10.10:FF:000029">
    <property type="entry name" value="WD repeat-containing protein 5"/>
    <property type="match status" value="1"/>
</dbReference>
<dbReference type="Gene3D" id="2.130.10.10">
    <property type="entry name" value="YVTN repeat-like/Quinoprotein amine dehydrogenase"/>
    <property type="match status" value="1"/>
</dbReference>
<dbReference type="InterPro" id="IPR020472">
    <property type="entry name" value="G-protein_beta_WD-40_rep"/>
</dbReference>
<dbReference type="InterPro" id="IPR015943">
    <property type="entry name" value="WD40/YVTN_repeat-like_dom_sf"/>
</dbReference>
<dbReference type="InterPro" id="IPR019775">
    <property type="entry name" value="WD40_repeat_CS"/>
</dbReference>
<dbReference type="InterPro" id="IPR036322">
    <property type="entry name" value="WD40_repeat_dom_sf"/>
</dbReference>
<dbReference type="InterPro" id="IPR001680">
    <property type="entry name" value="WD40_rpt"/>
</dbReference>
<dbReference type="PANTHER" id="PTHR22847:SF560">
    <property type="entry name" value="WD REPEAT-CONTAINING PROTEIN 5"/>
    <property type="match status" value="1"/>
</dbReference>
<dbReference type="PANTHER" id="PTHR22847">
    <property type="entry name" value="WD40 REPEAT PROTEIN"/>
    <property type="match status" value="1"/>
</dbReference>
<dbReference type="Pfam" id="PF25175">
    <property type="entry name" value="Beta-prop_WDR5"/>
    <property type="match status" value="1"/>
</dbReference>
<dbReference type="PIRSF" id="PIRSF002394">
    <property type="entry name" value="GN-bd_beta"/>
    <property type="match status" value="1"/>
</dbReference>
<dbReference type="PRINTS" id="PR00320">
    <property type="entry name" value="GPROTEINBRPT"/>
</dbReference>
<dbReference type="SMART" id="SM00320">
    <property type="entry name" value="WD40"/>
    <property type="match status" value="7"/>
</dbReference>
<dbReference type="SUPFAM" id="SSF50978">
    <property type="entry name" value="WD40 repeat-like"/>
    <property type="match status" value="1"/>
</dbReference>
<dbReference type="PROSITE" id="PS00678">
    <property type="entry name" value="WD_REPEATS_1"/>
    <property type="match status" value="4"/>
</dbReference>
<dbReference type="PROSITE" id="PS50082">
    <property type="entry name" value="WD_REPEATS_2"/>
    <property type="match status" value="6"/>
</dbReference>
<dbReference type="PROSITE" id="PS50294">
    <property type="entry name" value="WD_REPEATS_REGION"/>
    <property type="match status" value="1"/>
</dbReference>
<accession>Q498M4</accession>
<name>WDR5_RAT</name>
<comment type="function">
    <text evidence="2 3">Contributes to histone modification (By similarity). May position the N-terminus of histone H3 for efficient trimethylation at 'Lys-4' (By similarity). As part of the MLL1/MLL complex it is involved in methylation and dimethylation at 'Lys-4' of histone H3 (By similarity). H3 'Lys-4' methylation represents a specific tag for epigenetic transcriptional activation (By similarity). As part of the NSL complex it may be involved in acetylation of nucleosomal histone H4 on several lysine residues (By similarity). May regulate osteoblasts differentiation (By similarity). In association with RBBP5 and ASH2L, stimulates the histone methyltransferase activities of KMT2A, KMT2B, KMT2C, KMT2D, SETD1A and SETD1B (By similarity).</text>
</comment>
<comment type="subunit">
    <text evidence="2 5">Interacts with PAXBP1; the interaction is direct and links a WDR5-containing histone methyltransferase complex to PAX7 and PAX3 (By similarity). Interacts with HCFC1 (By similarity). Component of the ATAC complex, a complex with histone acetyltransferase activity on histones H3 and H4 (By similarity). Component of the SET1 complex, at least composed of the catalytic subunit (SETD1A or SETD1B), WDR5, WDR82, RBBP5, ASH2L/ASH2, CXXC1/CFP1, HCFC1 and DPY30 (By similarity). Core component of several methyltransferase-containing complexes including MLL1/MLL, MLL2/3 (also named ASCOM complex) and MLL4/WBP7 (By similarity). Each complex is at least composed of ASH2L, RBBP5, WDR5, DPY30, one or more specific histone methyltransferases (KMT2A/MLL1, KMT2D/MLL2, KMT2C/MLL3 and KMT2B/MLL4), and the facultative components PAGR1, BACC1, CHD8, E2F6, HCFC1, HCFC2, HSP70, INO80C, KDM6A, KANSL1, LAS1L, MAX, MCRS1, MEN1, MGA, MYST1/MOF, NCOA6, PAXIP1/PTIP, PELP1, PHF20, PRP31, RING2, RUVB1/TIP49A, RUVB2/TIP49B, SENP3, TAF1, TAF4, TAF6, TAF7, TAF9, TEX10 and alpha- and beta-tubulin (By similarity). Component of the NSL complex at least composed of MOF/KAT8, KANSL1, KANSL2, KANSL3, MCRS1, PHF20, OGT1/OGT, WDR5 and HCFC1 (By similarity). Interacts with KMT2A/MLL1 (via WIN motif) and RBBP5; the interaction is direct (By similarity). Component ofthe ADA2A-containing complex (ATAC), composed of KAT14, KAT2A, TADA2L, TADA3L, ZZ3, MBIP, WDR5, YEATS2, CCDC101 and DR1 (By similarity). In the complex, it probably interacts directly with KAT2A, MBIP and KAT14 (By similarity). Interacts with histone H3 (By similarity). Interacts with SETD1A (via WIN motif) (By similarity). Component of a histone methylation complex composed of at least ZNF335, RBBP5, ASH2L and WDR5; the complex may have histone H3-specific methyltransferase activity, however does not have specificity for 'Lys-4' of histone H3 (By similarity). Interacts with ZNF335 (By similarity). Components of this complex may associate with components of the ZNF335-CCAR2-EMSY nuclear receptor-mediated transcription complex to form a complex at least composed of ZNF335, HCFC1, CCAR2, EMSY, MKI67, RBBP5, ASH2L and WDR5 (By similarity). Interacts with PER1 (PubMed:15860628). Interacts with KMT2B (via WIN motif), KMT2C (via WIN motif), KMT2D (via WIN motif) and SETD1B (via WIN motif) (By similarity).</text>
</comment>
<comment type="subcellular location">
    <subcellularLocation>
        <location evidence="1">Nucleus</location>
    </subcellularLocation>
</comment>
<comment type="similarity">
    <text evidence="6">Belongs to the WD repeat WDR5/wds family.</text>
</comment>
<gene>
    <name type="primary">Wdr5</name>
</gene>
<organism>
    <name type="scientific">Rattus norvegicus</name>
    <name type="common">Rat</name>
    <dbReference type="NCBI Taxonomy" id="10116"/>
    <lineage>
        <taxon>Eukaryota</taxon>
        <taxon>Metazoa</taxon>
        <taxon>Chordata</taxon>
        <taxon>Craniata</taxon>
        <taxon>Vertebrata</taxon>
        <taxon>Euteleostomi</taxon>
        <taxon>Mammalia</taxon>
        <taxon>Eutheria</taxon>
        <taxon>Euarchontoglires</taxon>
        <taxon>Glires</taxon>
        <taxon>Rodentia</taxon>
        <taxon>Myomorpha</taxon>
        <taxon>Muroidea</taxon>
        <taxon>Muridae</taxon>
        <taxon>Murinae</taxon>
        <taxon>Rattus</taxon>
    </lineage>
</organism>
<sequence length="334" mass="36588">MATEEKKPETEAARAQPTPSSSATQSKPTPVKPNYALKFTLAGHTKAVSSVKFSPNGEWLASSSADKLIKIWGAYDGKFEKTISGHKLGISDVAWSSDSNLLVSASDDKTLKIWDVSSGKCLKTLKGHSNYVFCCNFNPQSNLIVSGSFDESVRIWDVKTGKCLKTLPAHSDPVSAVHFNRDGSLIVSSSYDGLCRIWDTASGQCLKTLIDDDNPPVSFVKFSPNGKYILAATLDNTLKLWDYSKGKCLKTYTGHKNEKYCIFANFSVTGGKWIVSGSEDNLVYIWNLQTKEIVQKLQGHTDVVISTACHPTENIIASAALENDKTIKLWKSDC</sequence>
<keyword id="KW-0002">3D-structure</keyword>
<keyword id="KW-0007">Acetylation</keyword>
<keyword id="KW-0156">Chromatin regulator</keyword>
<keyword id="KW-1017">Isopeptide bond</keyword>
<keyword id="KW-0539">Nucleus</keyword>
<keyword id="KW-1185">Reference proteome</keyword>
<keyword id="KW-0677">Repeat</keyword>
<keyword id="KW-0804">Transcription</keyword>
<keyword id="KW-0805">Transcription regulation</keyword>
<keyword id="KW-0832">Ubl conjugation</keyword>
<keyword id="KW-0853">WD repeat</keyword>
<feature type="initiator methionine" description="Removed" evidence="2">
    <location>
        <position position="1"/>
    </location>
</feature>
<feature type="chain" id="PRO_0000278192" description="WD repeat-containing protein 5">
    <location>
        <begin position="2"/>
        <end position="334"/>
    </location>
</feature>
<feature type="repeat" description="WD 1">
    <location>
        <begin position="43"/>
        <end position="82"/>
    </location>
</feature>
<feature type="repeat" description="WD 2">
    <location>
        <begin position="85"/>
        <end position="126"/>
    </location>
</feature>
<feature type="repeat" description="WD 3">
    <location>
        <begin position="128"/>
        <end position="168"/>
    </location>
</feature>
<feature type="repeat" description="WD 4">
    <location>
        <begin position="169"/>
        <end position="208"/>
    </location>
</feature>
<feature type="repeat" description="WD 5">
    <location>
        <begin position="212"/>
        <end position="253"/>
    </location>
</feature>
<feature type="repeat" description="WD 6">
    <location>
        <begin position="256"/>
        <end position="296"/>
    </location>
</feature>
<feature type="repeat" description="WD 7">
    <location>
        <begin position="299"/>
        <end position="333"/>
    </location>
</feature>
<feature type="region of interest" description="Disordered" evidence="4">
    <location>
        <begin position="1"/>
        <end position="31"/>
    </location>
</feature>
<feature type="compositionally biased region" description="Basic and acidic residues" evidence="4">
    <location>
        <begin position="1"/>
        <end position="12"/>
    </location>
</feature>
<feature type="compositionally biased region" description="Polar residues" evidence="4">
    <location>
        <begin position="17"/>
        <end position="28"/>
    </location>
</feature>
<feature type="site" description="Important for interaction with histone H3" evidence="1">
    <location>
        <position position="107"/>
    </location>
</feature>
<feature type="site" description="Important for interaction with histone H3" evidence="1">
    <location>
        <position position="133"/>
    </location>
</feature>
<feature type="site" description="Important for interaction with histone H3" evidence="1">
    <location>
        <position position="263"/>
    </location>
</feature>
<feature type="site" description="Important for interaction with histone H3" evidence="1">
    <location>
        <position position="322"/>
    </location>
</feature>
<feature type="modified residue" description="N-acetylalanine" evidence="2">
    <location>
        <position position="2"/>
    </location>
</feature>
<feature type="modified residue" description="N6-acetyllysine" evidence="2">
    <location>
        <position position="112"/>
    </location>
</feature>
<feature type="cross-link" description="Glycyl lysine isopeptide (Lys-Gly) (interchain with G-Cter in SUMO2)" evidence="2">
    <location>
        <position position="7"/>
    </location>
</feature>
<feature type="cross-link" description="Glycyl lysine isopeptide (Lys-Gly) (interchain with G-Cter in SUMO2)" evidence="2">
    <location>
        <position position="27"/>
    </location>
</feature>
<feature type="cross-link" description="Glycyl lysine isopeptide (Lys-Gly) (interchain with G-Cter in SUMO2)" evidence="2">
    <location>
        <position position="46"/>
    </location>
</feature>
<feature type="strand" evidence="7">
    <location>
        <begin position="36"/>
        <end position="41"/>
    </location>
</feature>
<feature type="strand" evidence="7">
    <location>
        <begin position="48"/>
        <end position="53"/>
    </location>
</feature>
<feature type="strand" evidence="7">
    <location>
        <begin position="57"/>
        <end position="64"/>
    </location>
</feature>
<feature type="strand" evidence="7">
    <location>
        <begin position="67"/>
        <end position="73"/>
    </location>
</feature>
<feature type="turn" evidence="7">
    <location>
        <begin position="74"/>
        <end position="76"/>
    </location>
</feature>
<feature type="strand" evidence="7">
    <location>
        <begin position="79"/>
        <end position="84"/>
    </location>
</feature>
<feature type="strand" evidence="7">
    <location>
        <begin position="90"/>
        <end position="95"/>
    </location>
</feature>
<feature type="strand" evidence="7">
    <location>
        <begin position="99"/>
        <end position="106"/>
    </location>
</feature>
<feature type="strand" evidence="7">
    <location>
        <begin position="111"/>
        <end position="115"/>
    </location>
</feature>
<feature type="turn" evidence="7">
    <location>
        <begin position="116"/>
        <end position="118"/>
    </location>
</feature>
<feature type="strand" evidence="7">
    <location>
        <begin position="121"/>
        <end position="125"/>
    </location>
</feature>
<feature type="strand" evidence="7">
    <location>
        <begin position="132"/>
        <end position="137"/>
    </location>
</feature>
<feature type="strand" evidence="7">
    <location>
        <begin position="139"/>
        <end position="148"/>
    </location>
</feature>
<feature type="strand" evidence="7">
    <location>
        <begin position="153"/>
        <end position="157"/>
    </location>
</feature>
<feature type="turn" evidence="7">
    <location>
        <begin position="158"/>
        <end position="160"/>
    </location>
</feature>
<feature type="strand" evidence="7">
    <location>
        <begin position="163"/>
        <end position="167"/>
    </location>
</feature>
<feature type="strand" evidence="7">
    <location>
        <begin position="174"/>
        <end position="179"/>
    </location>
</feature>
<feature type="strand" evidence="7">
    <location>
        <begin position="183"/>
        <end position="190"/>
    </location>
</feature>
<feature type="strand" evidence="7">
    <location>
        <begin position="195"/>
        <end position="199"/>
    </location>
</feature>
<feature type="turn" evidence="7">
    <location>
        <begin position="200"/>
        <end position="202"/>
    </location>
</feature>
<feature type="strand" evidence="7">
    <location>
        <begin position="205"/>
        <end position="209"/>
    </location>
</feature>
<feature type="strand" evidence="7">
    <location>
        <begin position="217"/>
        <end position="222"/>
    </location>
</feature>
<feature type="strand" evidence="7">
    <location>
        <begin position="226"/>
        <end position="233"/>
    </location>
</feature>
<feature type="turn" evidence="7">
    <location>
        <begin position="234"/>
        <end position="236"/>
    </location>
</feature>
<feature type="strand" evidence="7">
    <location>
        <begin position="237"/>
        <end position="242"/>
    </location>
</feature>
<feature type="turn" evidence="7">
    <location>
        <begin position="243"/>
        <end position="246"/>
    </location>
</feature>
<feature type="strand" evidence="7">
    <location>
        <begin position="247"/>
        <end position="252"/>
    </location>
</feature>
<feature type="strand" evidence="7">
    <location>
        <begin position="258"/>
        <end position="260"/>
    </location>
</feature>
<feature type="strand" evidence="7">
    <location>
        <begin position="264"/>
        <end position="267"/>
    </location>
</feature>
<feature type="strand" evidence="7">
    <location>
        <begin position="269"/>
        <end position="271"/>
    </location>
</feature>
<feature type="strand" evidence="7">
    <location>
        <begin position="273"/>
        <end position="276"/>
    </location>
</feature>
<feature type="strand" evidence="7">
    <location>
        <begin position="283"/>
        <end position="287"/>
    </location>
</feature>
<feature type="turn" evidence="7">
    <location>
        <begin position="288"/>
        <end position="290"/>
    </location>
</feature>
<feature type="strand" evidence="7">
    <location>
        <begin position="293"/>
        <end position="297"/>
    </location>
</feature>
<feature type="strand" evidence="7">
    <location>
        <begin position="304"/>
        <end position="309"/>
    </location>
</feature>
<feature type="strand" evidence="7">
    <location>
        <begin position="311"/>
        <end position="320"/>
    </location>
</feature>
<feature type="turn" evidence="7">
    <location>
        <begin position="322"/>
        <end position="324"/>
    </location>
</feature>
<feature type="strand" evidence="7">
    <location>
        <begin position="327"/>
        <end position="331"/>
    </location>
</feature>
<protein>
    <recommendedName>
        <fullName>WD repeat-containing protein 5</fullName>
    </recommendedName>
</protein>
<reference key="1">
    <citation type="journal article" date="2004" name="Genome Res.">
        <title>The status, quality, and expansion of the NIH full-length cDNA project: the Mammalian Gene Collection (MGC).</title>
        <authorList>
            <consortium name="The MGC Project Team"/>
        </authorList>
    </citation>
    <scope>NUCLEOTIDE SEQUENCE [LARGE SCALE MRNA]</scope>
    <source>
        <tissue>Placenta</tissue>
    </source>
</reference>
<reference key="2">
    <citation type="journal article" date="2005" name="Science">
        <title>PERIOD1-associated proteins modulate the negative limb of the mammalian circadian oscillator.</title>
        <authorList>
            <person name="Brown S.A."/>
            <person name="Ripperger J."/>
            <person name="Kadener S."/>
            <person name="Fleury-Olela F."/>
            <person name="Vilbois F."/>
            <person name="Rosbash M."/>
            <person name="Schibler U."/>
        </authorList>
    </citation>
    <scope>INTERACTION WITH PER1</scope>
</reference>
<proteinExistence type="evidence at protein level"/>